<sequence>MTIRSLNLFIIDKKHQHKSSLSSFQNCKLGIDASFYLTQIIHSFTPQELQSLAVNGESEYLQHRISEFLEQLRTENITPIFVFNGIPLTFEASSQLEVPGKQKSHSALTDFEAFDPYDANIQRNMYRMDASGPANYGESKPTLLYTNQRDHLDRLCDQVKFYLDQCNVEYFVAPYLAMAQLAYFLNGTSSPYIDAIYGSTDLLLFGVKKFITSMNTSSNVKISSDPSSPSTQTTINSAAKSSFTWLDGNALLQDTNGLSWQQFIDSCLLCGTAISPTFPQIEGTFLIKSAMELVRMFGSAYRAVLHFAEIFPQPIFQDYLQQYKRAVCFSKFGIVMDTKGLTLPPVPTESVPNDINIYFGTRLPNEIYFYISRGLIPCKMIGALVSGCFSDPVSILEQHIGDKASQGTFSGANSGLNPGRDNAAAVAAVDQRRFVDDLEEIWSQGLNLLTQPLNRFYQARDIVSLHGHNQQASLKVMHSYDPPLYNDTRAWMIYEENLPSYLSSNFLKEEPVVLFDLLRALNDPVFVKKSFCTEGNIGIKNPPKHPLSSTAEIVLSSCYRFLQIRSFVLTSHQLTSWGCPLLKALENCHLQNQTSVVVLFELLRLRQLKEPSLLSSSSASIADLSITSATEFLAKVATFLPIKQRPEVSKISIVDENLLQFYQLQTSFGSNLKELMAMILASVILNRNVDKSKIDPKLIRKTLPFQNINGSLVSGFVVKRFFEIISKEQEASSQQENIQKAYEIIEKEFPTIGSAENHIAQFLEFWKTFMEGVKEAENTSAIGKLVLSKLFLTNQWIFSLGL</sequence>
<dbReference type="EMBL" id="CU329670">
    <property type="protein sequence ID" value="CAB88876.3"/>
    <property type="molecule type" value="Genomic_DNA"/>
</dbReference>
<dbReference type="EMBL" id="D89176">
    <property type="protein sequence ID" value="BAA13838.1"/>
    <property type="status" value="ALT_FRAME"/>
    <property type="molecule type" value="mRNA"/>
</dbReference>
<dbReference type="PIR" id="T37602">
    <property type="entry name" value="T37602"/>
</dbReference>
<dbReference type="PIR" id="T42541">
    <property type="entry name" value="T42541"/>
</dbReference>
<dbReference type="RefSeq" id="XP_001713046.1">
    <property type="nucleotide sequence ID" value="XM_001712994.2"/>
</dbReference>
<dbReference type="BioGRID" id="278256">
    <property type="interactions" value="52"/>
</dbReference>
<dbReference type="FunCoup" id="Q9UTN2">
    <property type="interactions" value="445"/>
</dbReference>
<dbReference type="IntAct" id="Q9UTN2">
    <property type="interactions" value="1"/>
</dbReference>
<dbReference type="STRING" id="284812.Q9UTN2"/>
<dbReference type="iPTMnet" id="Q9UTN2"/>
<dbReference type="PaxDb" id="4896-SPAC139.01c.1"/>
<dbReference type="EnsemblFungi" id="SPAC139.01c.1">
    <property type="protein sequence ID" value="SPAC139.01c.1:pep"/>
    <property type="gene ID" value="SPAC139.01c"/>
</dbReference>
<dbReference type="PomBase" id="SPAC139.01c">
    <property type="gene designation" value="mkt1"/>
</dbReference>
<dbReference type="VEuPathDB" id="FungiDB:SPAC139.01c"/>
<dbReference type="eggNOG" id="ENOG502QVHA">
    <property type="taxonomic scope" value="Eukaryota"/>
</dbReference>
<dbReference type="HOGENOM" id="CLU_378548_0_0_1"/>
<dbReference type="InParanoid" id="Q9UTN2"/>
<dbReference type="OMA" id="RFYQTKV"/>
<dbReference type="PhylomeDB" id="Q9UTN2"/>
<dbReference type="PRO" id="PR:Q9UTN2"/>
<dbReference type="Proteomes" id="UP000002485">
    <property type="component" value="Chromosome I"/>
</dbReference>
<dbReference type="GO" id="GO:0005829">
    <property type="term" value="C:cytosol"/>
    <property type="evidence" value="ECO:0007005"/>
    <property type="project" value="PomBase"/>
</dbReference>
<dbReference type="GO" id="GO:0005634">
    <property type="term" value="C:nucleus"/>
    <property type="evidence" value="ECO:0007005"/>
    <property type="project" value="PomBase"/>
</dbReference>
<dbReference type="GO" id="GO:0003730">
    <property type="term" value="F:mRNA 3'-UTR binding"/>
    <property type="evidence" value="ECO:0000314"/>
    <property type="project" value="PomBase"/>
</dbReference>
<dbReference type="GO" id="GO:0004518">
    <property type="term" value="F:nuclease activity"/>
    <property type="evidence" value="ECO:0007669"/>
    <property type="project" value="InterPro"/>
</dbReference>
<dbReference type="GO" id="GO:0043488">
    <property type="term" value="P:regulation of mRNA stability"/>
    <property type="evidence" value="ECO:0000250"/>
    <property type="project" value="PomBase"/>
</dbReference>
<dbReference type="GO" id="GO:0006417">
    <property type="term" value="P:regulation of translation"/>
    <property type="evidence" value="ECO:0007669"/>
    <property type="project" value="UniProtKB-KW"/>
</dbReference>
<dbReference type="CDD" id="cd09858">
    <property type="entry name" value="PIN_MKT1"/>
    <property type="match status" value="1"/>
</dbReference>
<dbReference type="Gene3D" id="3.40.50.1010">
    <property type="entry name" value="5'-nuclease"/>
    <property type="match status" value="1"/>
</dbReference>
<dbReference type="InterPro" id="IPR022039">
    <property type="entry name" value="MKT1_C"/>
</dbReference>
<dbReference type="InterPro" id="IPR022040">
    <property type="entry name" value="MKT1_N"/>
</dbReference>
<dbReference type="InterPro" id="IPR029060">
    <property type="entry name" value="PIN-like_dom_sf"/>
</dbReference>
<dbReference type="InterPro" id="IPR006084">
    <property type="entry name" value="XPG/Rad2"/>
</dbReference>
<dbReference type="InterPro" id="IPR006085">
    <property type="entry name" value="XPG_DNA_repair_N"/>
</dbReference>
<dbReference type="PANTHER" id="PTHR11081">
    <property type="entry name" value="FLAP ENDONUCLEASE FAMILY MEMBER"/>
    <property type="match status" value="1"/>
</dbReference>
<dbReference type="PANTHER" id="PTHR11081:SF32">
    <property type="entry name" value="POST-TRANSCRIPTIONAL REGULATOR MKT1"/>
    <property type="match status" value="1"/>
</dbReference>
<dbReference type="Pfam" id="PF12246">
    <property type="entry name" value="MKT1_C"/>
    <property type="match status" value="1"/>
</dbReference>
<dbReference type="Pfam" id="PF12247">
    <property type="entry name" value="MKT1_N"/>
    <property type="match status" value="1"/>
</dbReference>
<dbReference type="Pfam" id="PF00752">
    <property type="entry name" value="XPG_N"/>
    <property type="match status" value="1"/>
</dbReference>
<dbReference type="SMART" id="SM00485">
    <property type="entry name" value="XPGN"/>
    <property type="match status" value="1"/>
</dbReference>
<dbReference type="SUPFAM" id="SSF88723">
    <property type="entry name" value="PIN domain-like"/>
    <property type="match status" value="1"/>
</dbReference>
<keyword id="KW-0597">Phosphoprotein</keyword>
<keyword id="KW-1185">Reference proteome</keyword>
<keyword id="KW-0810">Translation regulation</keyword>
<name>MKT1_SCHPO</name>
<reference key="1">
    <citation type="journal article" date="2002" name="Nature">
        <title>The genome sequence of Schizosaccharomyces pombe.</title>
        <authorList>
            <person name="Wood V."/>
            <person name="Gwilliam R."/>
            <person name="Rajandream M.A."/>
            <person name="Lyne M.H."/>
            <person name="Lyne R."/>
            <person name="Stewart A."/>
            <person name="Sgouros J.G."/>
            <person name="Peat N."/>
            <person name="Hayles J."/>
            <person name="Baker S.G."/>
            <person name="Basham D."/>
            <person name="Bowman S."/>
            <person name="Brooks K."/>
            <person name="Brown D."/>
            <person name="Brown S."/>
            <person name="Chillingworth T."/>
            <person name="Churcher C.M."/>
            <person name="Collins M."/>
            <person name="Connor R."/>
            <person name="Cronin A."/>
            <person name="Davis P."/>
            <person name="Feltwell T."/>
            <person name="Fraser A."/>
            <person name="Gentles S."/>
            <person name="Goble A."/>
            <person name="Hamlin N."/>
            <person name="Harris D.E."/>
            <person name="Hidalgo J."/>
            <person name="Hodgson G."/>
            <person name="Holroyd S."/>
            <person name="Hornsby T."/>
            <person name="Howarth S."/>
            <person name="Huckle E.J."/>
            <person name="Hunt S."/>
            <person name="Jagels K."/>
            <person name="James K.D."/>
            <person name="Jones L."/>
            <person name="Jones M."/>
            <person name="Leather S."/>
            <person name="McDonald S."/>
            <person name="McLean J."/>
            <person name="Mooney P."/>
            <person name="Moule S."/>
            <person name="Mungall K.L."/>
            <person name="Murphy L.D."/>
            <person name="Niblett D."/>
            <person name="Odell C."/>
            <person name="Oliver K."/>
            <person name="O'Neil S."/>
            <person name="Pearson D."/>
            <person name="Quail M.A."/>
            <person name="Rabbinowitsch E."/>
            <person name="Rutherford K.M."/>
            <person name="Rutter S."/>
            <person name="Saunders D."/>
            <person name="Seeger K."/>
            <person name="Sharp S."/>
            <person name="Skelton J."/>
            <person name="Simmonds M.N."/>
            <person name="Squares R."/>
            <person name="Squares S."/>
            <person name="Stevens K."/>
            <person name="Taylor K."/>
            <person name="Taylor R.G."/>
            <person name="Tivey A."/>
            <person name="Walsh S.V."/>
            <person name="Warren T."/>
            <person name="Whitehead S."/>
            <person name="Woodward J.R."/>
            <person name="Volckaert G."/>
            <person name="Aert R."/>
            <person name="Robben J."/>
            <person name="Grymonprez B."/>
            <person name="Weltjens I."/>
            <person name="Vanstreels E."/>
            <person name="Rieger M."/>
            <person name="Schaefer M."/>
            <person name="Mueller-Auer S."/>
            <person name="Gabel C."/>
            <person name="Fuchs M."/>
            <person name="Duesterhoeft A."/>
            <person name="Fritzc C."/>
            <person name="Holzer E."/>
            <person name="Moestl D."/>
            <person name="Hilbert H."/>
            <person name="Borzym K."/>
            <person name="Langer I."/>
            <person name="Beck A."/>
            <person name="Lehrach H."/>
            <person name="Reinhardt R."/>
            <person name="Pohl T.M."/>
            <person name="Eger P."/>
            <person name="Zimmermann W."/>
            <person name="Wedler H."/>
            <person name="Wambutt R."/>
            <person name="Purnelle B."/>
            <person name="Goffeau A."/>
            <person name="Cadieu E."/>
            <person name="Dreano S."/>
            <person name="Gloux S."/>
            <person name="Lelaure V."/>
            <person name="Mottier S."/>
            <person name="Galibert F."/>
            <person name="Aves S.J."/>
            <person name="Xiang Z."/>
            <person name="Hunt C."/>
            <person name="Moore K."/>
            <person name="Hurst S.M."/>
            <person name="Lucas M."/>
            <person name="Rochet M."/>
            <person name="Gaillardin C."/>
            <person name="Tallada V.A."/>
            <person name="Garzon A."/>
            <person name="Thode G."/>
            <person name="Daga R.R."/>
            <person name="Cruzado L."/>
            <person name="Jimenez J."/>
            <person name="Sanchez M."/>
            <person name="del Rey F."/>
            <person name="Benito J."/>
            <person name="Dominguez A."/>
            <person name="Revuelta J.L."/>
            <person name="Moreno S."/>
            <person name="Armstrong J."/>
            <person name="Forsburg S.L."/>
            <person name="Cerutti L."/>
            <person name="Lowe T."/>
            <person name="McCombie W.R."/>
            <person name="Paulsen I."/>
            <person name="Potashkin J."/>
            <person name="Shpakovski G.V."/>
            <person name="Ussery D."/>
            <person name="Barrell B.G."/>
            <person name="Nurse P."/>
        </authorList>
    </citation>
    <scope>NUCLEOTIDE SEQUENCE [LARGE SCALE GENOMIC DNA]</scope>
    <source>
        <strain>972 / ATCC 24843</strain>
    </source>
</reference>
<reference key="2">
    <citation type="journal article" date="1997" name="DNA Res.">
        <title>Identification of open reading frames in Schizosaccharomyces pombe cDNAs.</title>
        <authorList>
            <person name="Yoshioka S."/>
            <person name="Kato K."/>
            <person name="Nakai K."/>
            <person name="Okayama H."/>
            <person name="Nojima H."/>
        </authorList>
    </citation>
    <scope>NUCLEOTIDE SEQUENCE [LARGE SCALE MRNA] OF 448-802</scope>
    <source>
        <strain>PR745</strain>
    </source>
</reference>
<reference key="3">
    <citation type="journal article" date="2008" name="J. Proteome Res.">
        <title>Phosphoproteome analysis of fission yeast.</title>
        <authorList>
            <person name="Wilson-Grady J.T."/>
            <person name="Villen J."/>
            <person name="Gygi S.P."/>
        </authorList>
    </citation>
    <scope>PHOSPHORYLATION [LARGE SCALE ANALYSIS] AT SER-227; SER-228 AND SER-230</scope>
    <scope>IDENTIFICATION BY MASS SPECTROMETRY</scope>
</reference>
<reference key="4">
    <citation type="journal article" date="2020" name="Nucleic Acids Res.">
        <title>Mkt1 is required for RNAi-mediated silencing and establishment of heterochromatin in fission yeast.</title>
        <authorList>
            <person name="Taglini F."/>
            <person name="Chapman E."/>
            <person name="van Nues R."/>
            <person name="Theron E."/>
            <person name="Bayne E.H."/>
        </authorList>
    </citation>
    <scope>FUNCTION</scope>
    <scope>INTERACTION WITH ATH1</scope>
    <scope>DISRUPTION PHENOTYPE</scope>
    <scope>MUTAGENESIS OF 8-LEU--ASP-12; ASP-32 AND ASP-201</scope>
</reference>
<proteinExistence type="evidence at protein level"/>
<feature type="chain" id="PRO_0000154048" description="Post-transcriptional regulator mkt1">
    <location>
        <begin position="1"/>
        <end position="802"/>
    </location>
</feature>
<feature type="modified residue" description="Phosphoserine" evidence="1">
    <location>
        <position position="227"/>
    </location>
</feature>
<feature type="modified residue" description="Phosphoserine" evidence="1">
    <location>
        <position position="228"/>
    </location>
</feature>
<feature type="modified residue" description="Phosphoserine" evidence="1">
    <location>
        <position position="230"/>
    </location>
</feature>
<feature type="mutagenesis site" description="Normal chromatin silencing by small RNA." evidence="2">
    <original>LFIID</original>
    <variation>AAAAA</variation>
    <location>
        <begin position="8"/>
        <end position="12"/>
    </location>
</feature>
<feature type="mutagenesis site" description="Normal chromatin silencing by small RNA." evidence="2">
    <original>D</original>
    <variation>A</variation>
    <location>
        <position position="32"/>
    </location>
</feature>
<feature type="mutagenesis site" description="Normal chromatin silencing by small RNA." evidence="2">
    <original>D</original>
    <variation>A</variation>
    <location>
        <position position="201"/>
    </location>
</feature>
<feature type="sequence conflict" description="In Ref. 2; BAA13838." evidence="3" ref="2">
    <original>L</original>
    <variation>F</variation>
    <location>
        <position position="608"/>
    </location>
</feature>
<feature type="sequence conflict" description="In Ref. 2; BAA13838." evidence="3" ref="2">
    <original>D</original>
    <variation>N</variation>
    <location>
        <position position="623"/>
    </location>
</feature>
<feature type="sequence conflict" description="In Ref. 2; BAA13838." evidence="3" ref="2">
    <original>I</original>
    <variation>M</variation>
    <location>
        <position position="626"/>
    </location>
</feature>
<feature type="sequence conflict" description="In Ref. 2; BAA13838." evidence="3" ref="2">
    <original>S</original>
    <variation>C</variation>
    <location>
        <position position="649"/>
    </location>
</feature>
<feature type="sequence conflict" description="In Ref. 2; BAA13838." evidence="3" ref="2">
    <original>N</original>
    <variation>K</variation>
    <location>
        <position position="688"/>
    </location>
</feature>
<gene>
    <name evidence="5" type="primary">mkt1</name>
    <name evidence="5" type="ORF">SPAC139.01c</name>
    <name evidence="5" type="ORF">SPAC955.02c</name>
</gene>
<evidence type="ECO:0000269" key="1">
    <source>
    </source>
</evidence>
<evidence type="ECO:0000269" key="2">
    <source>
    </source>
</evidence>
<evidence type="ECO:0000305" key="3"/>
<evidence type="ECO:0000305" key="4">
    <source>
    </source>
</evidence>
<evidence type="ECO:0000312" key="5">
    <source>
        <dbReference type="PomBase" id="SPAC139.01c"/>
    </source>
</evidence>
<protein>
    <recommendedName>
        <fullName evidence="5">Post-transcriptional regulator mkt1</fullName>
    </recommendedName>
    <alternativeName>
        <fullName evidence="3">Inactive endonuclease mkt1</fullName>
    </alternativeName>
    <alternativeName>
        <fullName evidence="5">Post-transcriptional RNA stability regulator mkt1</fullName>
    </alternativeName>
</protein>
<accession>Q9UTN2</accession>
<accession>P78828</accession>
<accession>Q9P6S7</accession>
<comment type="function">
    <text evidence="2">Involved in post-transcriptional regulation of gene expression by 3'-UTR-mediated RNA regulation (PubMed:31822915). Promotes interactions between mRNA and poly(A)-binding protein (PubMed:31822915). Binds the 3' UTR of mRNAs, centromeric transcripts and antisense-rDNA (PubMed:31822915). Required for the establishment but not the maintenance of heterochromatin at pericentromeres, and for the maintenance of small domains of facultative heterochromatin known as HOODs (PubMed:31822915).</text>
</comment>
<comment type="subunit">
    <text evidence="4">Interacts with pab1 binding protein ath1.</text>
</comment>
<comment type="disruption phenotype">
    <text evidence="2">Abnormal establishment of heterochromatin (PubMed:31822915). Increased level of RNA-DNA hybrids (PubMed:31822915).</text>
</comment>
<comment type="similarity">
    <text evidence="3">Belongs to the XPG/RAD2 endonuclease family.</text>
</comment>
<comment type="caution">
    <text evidence="4">Although it belongs to the XPG/RAD2 endonuclease family, only two of the seven Asp residues involved in Mg(2+) binding are conserved suggesting that it has no nuclease activity.</text>
</comment>
<comment type="sequence caution" evidence="3">
    <conflict type="frameshift">
        <sequence resource="EMBL-CDS" id="BAA13838"/>
    </conflict>
</comment>
<organism>
    <name type="scientific">Schizosaccharomyces pombe (strain 972 / ATCC 24843)</name>
    <name type="common">Fission yeast</name>
    <dbReference type="NCBI Taxonomy" id="284812"/>
    <lineage>
        <taxon>Eukaryota</taxon>
        <taxon>Fungi</taxon>
        <taxon>Dikarya</taxon>
        <taxon>Ascomycota</taxon>
        <taxon>Taphrinomycotina</taxon>
        <taxon>Schizosaccharomycetes</taxon>
        <taxon>Schizosaccharomycetales</taxon>
        <taxon>Schizosaccharomycetaceae</taxon>
        <taxon>Schizosaccharomyces</taxon>
    </lineage>
</organism>